<sequence length="126" mass="14449">MSAYRQPVERYWWARRRSYLRFMLREISCIFVAWFVLYLMLVLRAVGAGGNSYQRFLDFSANPVVVVLNVVALSFLLLHAVTWFGSAPRAMVIQVRGRRVPARAVLAGHYAAWLVVSVIVAWMVLS</sequence>
<protein>
    <recommendedName>
        <fullName evidence="1">Fumarate reductase subunit C</fullName>
    </recommendedName>
    <alternativeName>
        <fullName evidence="1">Quinol-fumarate reductase subunit C</fullName>
        <shortName evidence="1">QFR subunit C</shortName>
    </alternativeName>
</protein>
<gene>
    <name evidence="1" type="primary">frdC</name>
    <name type="ordered locus">Rv1554</name>
    <name type="ORF">MTCY48.11c</name>
</gene>
<feature type="chain" id="PRO_0000196531" description="Fumarate reductase subunit C">
    <location>
        <begin position="1"/>
        <end position="126"/>
    </location>
</feature>
<feature type="transmembrane region" description="Helical" evidence="1">
    <location>
        <begin position="30"/>
        <end position="50"/>
    </location>
</feature>
<feature type="transmembrane region" description="Helical" evidence="1">
    <location>
        <begin position="64"/>
        <end position="84"/>
    </location>
</feature>
<feature type="transmembrane region" description="Helical" evidence="1">
    <location>
        <begin position="105"/>
        <end position="125"/>
    </location>
</feature>
<dbReference type="EMBL" id="AL123456">
    <property type="protein sequence ID" value="CCP44318.1"/>
    <property type="molecule type" value="Genomic_DNA"/>
</dbReference>
<dbReference type="PIR" id="G70762">
    <property type="entry name" value="G70762"/>
</dbReference>
<dbReference type="RefSeq" id="NP_216070.1">
    <property type="nucleotide sequence ID" value="NC_000962.3"/>
</dbReference>
<dbReference type="RefSeq" id="WP_003916859.1">
    <property type="nucleotide sequence ID" value="NZ_NVQJ01000004.1"/>
</dbReference>
<dbReference type="SMR" id="P9WNB7"/>
<dbReference type="FunCoup" id="P9WNB7">
    <property type="interactions" value="203"/>
</dbReference>
<dbReference type="STRING" id="83332.Rv1554"/>
<dbReference type="PaxDb" id="83332-Rv1554"/>
<dbReference type="GeneID" id="886371"/>
<dbReference type="KEGG" id="mtu:Rv1554"/>
<dbReference type="KEGG" id="mtv:RVBD_1554"/>
<dbReference type="TubercuList" id="Rv1554"/>
<dbReference type="eggNOG" id="COG3029">
    <property type="taxonomic scope" value="Bacteria"/>
</dbReference>
<dbReference type="InParanoid" id="P9WNB7"/>
<dbReference type="OrthoDB" id="8909678at2"/>
<dbReference type="PhylomeDB" id="P9WNB7"/>
<dbReference type="Proteomes" id="UP000001584">
    <property type="component" value="Chromosome"/>
</dbReference>
<dbReference type="GO" id="GO:0045283">
    <property type="term" value="C:fumarate reductase complex"/>
    <property type="evidence" value="ECO:0007669"/>
    <property type="project" value="UniProtKB-UniRule"/>
</dbReference>
<dbReference type="GO" id="GO:0005886">
    <property type="term" value="C:plasma membrane"/>
    <property type="evidence" value="ECO:0007669"/>
    <property type="project" value="UniProtKB-SubCell"/>
</dbReference>
<dbReference type="GO" id="GO:0000104">
    <property type="term" value="F:succinate dehydrogenase activity"/>
    <property type="evidence" value="ECO:0007669"/>
    <property type="project" value="UniProtKB-UniRule"/>
</dbReference>
<dbReference type="CDD" id="cd00546">
    <property type="entry name" value="QFR_TypeD_subunitC"/>
    <property type="match status" value="1"/>
</dbReference>
<dbReference type="Gene3D" id="1.20.1300.10">
    <property type="entry name" value="Fumarate reductase/succinate dehydrogenase, transmembrane subunit"/>
    <property type="match status" value="1"/>
</dbReference>
<dbReference type="HAMAP" id="MF_00708">
    <property type="entry name" value="Fumarate_red_C"/>
    <property type="match status" value="1"/>
</dbReference>
<dbReference type="InterPro" id="IPR003510">
    <property type="entry name" value="Fumarate_red_C"/>
</dbReference>
<dbReference type="InterPro" id="IPR034804">
    <property type="entry name" value="SQR/QFR_C/D"/>
</dbReference>
<dbReference type="NCBIfam" id="NF010126">
    <property type="entry name" value="PRK13603.1"/>
    <property type="match status" value="1"/>
</dbReference>
<dbReference type="Pfam" id="PF02300">
    <property type="entry name" value="Fumarate_red_C"/>
    <property type="match status" value="1"/>
</dbReference>
<dbReference type="PIRSF" id="PIRSF000180">
    <property type="entry name" value="FrdC"/>
    <property type="match status" value="1"/>
</dbReference>
<dbReference type="SUPFAM" id="SSF81343">
    <property type="entry name" value="Fumarate reductase respiratory complex transmembrane subunits"/>
    <property type="match status" value="1"/>
</dbReference>
<reference key="1">
    <citation type="journal article" date="1998" name="Nature">
        <title>Deciphering the biology of Mycobacterium tuberculosis from the complete genome sequence.</title>
        <authorList>
            <person name="Cole S.T."/>
            <person name="Brosch R."/>
            <person name="Parkhill J."/>
            <person name="Garnier T."/>
            <person name="Churcher C.M."/>
            <person name="Harris D.E."/>
            <person name="Gordon S.V."/>
            <person name="Eiglmeier K."/>
            <person name="Gas S."/>
            <person name="Barry C.E. III"/>
            <person name="Tekaia F."/>
            <person name="Badcock K."/>
            <person name="Basham D."/>
            <person name="Brown D."/>
            <person name="Chillingworth T."/>
            <person name="Connor R."/>
            <person name="Davies R.M."/>
            <person name="Devlin K."/>
            <person name="Feltwell T."/>
            <person name="Gentles S."/>
            <person name="Hamlin N."/>
            <person name="Holroyd S."/>
            <person name="Hornsby T."/>
            <person name="Jagels K."/>
            <person name="Krogh A."/>
            <person name="McLean J."/>
            <person name="Moule S."/>
            <person name="Murphy L.D."/>
            <person name="Oliver S."/>
            <person name="Osborne J."/>
            <person name="Quail M.A."/>
            <person name="Rajandream M.A."/>
            <person name="Rogers J."/>
            <person name="Rutter S."/>
            <person name="Seeger K."/>
            <person name="Skelton S."/>
            <person name="Squares S."/>
            <person name="Squares R."/>
            <person name="Sulston J.E."/>
            <person name="Taylor K."/>
            <person name="Whitehead S."/>
            <person name="Barrell B.G."/>
        </authorList>
    </citation>
    <scope>NUCLEOTIDE SEQUENCE [LARGE SCALE GENOMIC DNA]</scope>
    <source>
        <strain>ATCC 25618 / H37Rv</strain>
    </source>
</reference>
<keyword id="KW-1003">Cell membrane</keyword>
<keyword id="KW-0472">Membrane</keyword>
<keyword id="KW-1185">Reference proteome</keyword>
<keyword id="KW-0812">Transmembrane</keyword>
<keyword id="KW-1133">Transmembrane helix</keyword>
<evidence type="ECO:0000255" key="1">
    <source>
        <dbReference type="HAMAP-Rule" id="MF_00708"/>
    </source>
</evidence>
<comment type="function">
    <text evidence="1">Anchors the catalytic components of the fumarate reductase complex to the cell membrane, binds quinones.</text>
</comment>
<comment type="subunit">
    <text evidence="1">Part of an enzyme complex containing four subunits: a flavoprotein (FrdA), an iron-sulfur protein (FrdB), and two hydrophobic anchor proteins (FrdC and FrdD).</text>
</comment>
<comment type="subcellular location">
    <subcellularLocation>
        <location evidence="1">Cell membrane</location>
        <topology evidence="1">Multi-pass membrane protein</topology>
    </subcellularLocation>
</comment>
<comment type="similarity">
    <text evidence="1">Belongs to the FrdC family.</text>
</comment>
<proteinExistence type="inferred from homology"/>
<organism>
    <name type="scientific">Mycobacterium tuberculosis (strain ATCC 25618 / H37Rv)</name>
    <dbReference type="NCBI Taxonomy" id="83332"/>
    <lineage>
        <taxon>Bacteria</taxon>
        <taxon>Bacillati</taxon>
        <taxon>Actinomycetota</taxon>
        <taxon>Actinomycetes</taxon>
        <taxon>Mycobacteriales</taxon>
        <taxon>Mycobacteriaceae</taxon>
        <taxon>Mycobacterium</taxon>
        <taxon>Mycobacterium tuberculosis complex</taxon>
    </lineage>
</organism>
<accession>P9WNB7</accession>
<accession>L0T9Y7</accession>
<accession>Q10762</accession>
<name>FRDC_MYCTU</name>